<reference key="1">
    <citation type="journal article" date="2009" name="PLoS Genet.">
        <title>Organised genome dynamics in the Escherichia coli species results in highly diverse adaptive paths.</title>
        <authorList>
            <person name="Touchon M."/>
            <person name="Hoede C."/>
            <person name="Tenaillon O."/>
            <person name="Barbe V."/>
            <person name="Baeriswyl S."/>
            <person name="Bidet P."/>
            <person name="Bingen E."/>
            <person name="Bonacorsi S."/>
            <person name="Bouchier C."/>
            <person name="Bouvet O."/>
            <person name="Calteau A."/>
            <person name="Chiapello H."/>
            <person name="Clermont O."/>
            <person name="Cruveiller S."/>
            <person name="Danchin A."/>
            <person name="Diard M."/>
            <person name="Dossat C."/>
            <person name="Karoui M.E."/>
            <person name="Frapy E."/>
            <person name="Garry L."/>
            <person name="Ghigo J.M."/>
            <person name="Gilles A.M."/>
            <person name="Johnson J."/>
            <person name="Le Bouguenec C."/>
            <person name="Lescat M."/>
            <person name="Mangenot S."/>
            <person name="Martinez-Jehanne V."/>
            <person name="Matic I."/>
            <person name="Nassif X."/>
            <person name="Oztas S."/>
            <person name="Petit M.A."/>
            <person name="Pichon C."/>
            <person name="Rouy Z."/>
            <person name="Ruf C.S."/>
            <person name="Schneider D."/>
            <person name="Tourret J."/>
            <person name="Vacherie B."/>
            <person name="Vallenet D."/>
            <person name="Medigue C."/>
            <person name="Rocha E.P.C."/>
            <person name="Denamur E."/>
        </authorList>
    </citation>
    <scope>NUCLEOTIDE SEQUENCE [LARGE SCALE GENOMIC DNA]</scope>
    <source>
        <strain>55989 / EAEC</strain>
    </source>
</reference>
<dbReference type="EMBL" id="CU928145">
    <property type="protein sequence ID" value="CAU99798.1"/>
    <property type="molecule type" value="Genomic_DNA"/>
</dbReference>
<dbReference type="RefSeq" id="WP_000133044.1">
    <property type="nucleotide sequence ID" value="NC_011748.1"/>
</dbReference>
<dbReference type="SMR" id="B7LHN3"/>
<dbReference type="GeneID" id="75206024"/>
<dbReference type="KEGG" id="eck:EC55989_3588"/>
<dbReference type="HOGENOM" id="CLU_006301_6_3_6"/>
<dbReference type="Proteomes" id="UP000000746">
    <property type="component" value="Chromosome"/>
</dbReference>
<dbReference type="GO" id="GO:0005829">
    <property type="term" value="C:cytosol"/>
    <property type="evidence" value="ECO:0007669"/>
    <property type="project" value="TreeGrafter"/>
</dbReference>
<dbReference type="GO" id="GO:0005525">
    <property type="term" value="F:GTP binding"/>
    <property type="evidence" value="ECO:0007669"/>
    <property type="project" value="UniProtKB-KW"/>
</dbReference>
<dbReference type="GO" id="GO:0003924">
    <property type="term" value="F:GTPase activity"/>
    <property type="evidence" value="ECO:0007669"/>
    <property type="project" value="UniProtKB-UniRule"/>
</dbReference>
<dbReference type="GO" id="GO:0097216">
    <property type="term" value="F:guanosine tetraphosphate binding"/>
    <property type="evidence" value="ECO:0007669"/>
    <property type="project" value="UniProtKB-ARBA"/>
</dbReference>
<dbReference type="GO" id="GO:0003743">
    <property type="term" value="F:translation initiation factor activity"/>
    <property type="evidence" value="ECO:0007669"/>
    <property type="project" value="UniProtKB-UniRule"/>
</dbReference>
<dbReference type="CDD" id="cd01887">
    <property type="entry name" value="IF2_eIF5B"/>
    <property type="match status" value="1"/>
</dbReference>
<dbReference type="CDD" id="cd03702">
    <property type="entry name" value="IF2_mtIF2_II"/>
    <property type="match status" value="1"/>
</dbReference>
<dbReference type="CDD" id="cd03692">
    <property type="entry name" value="mtIF2_IVc"/>
    <property type="match status" value="1"/>
</dbReference>
<dbReference type="FunFam" id="2.40.30.10:FF:000007">
    <property type="entry name" value="Translation initiation factor IF-2"/>
    <property type="match status" value="1"/>
</dbReference>
<dbReference type="FunFam" id="2.40.30.10:FF:000008">
    <property type="entry name" value="Translation initiation factor IF-2"/>
    <property type="match status" value="1"/>
</dbReference>
<dbReference type="FunFam" id="3.30.56.50:FF:000001">
    <property type="entry name" value="Translation initiation factor IF-2"/>
    <property type="match status" value="1"/>
</dbReference>
<dbReference type="FunFam" id="3.40.50.10050:FF:000001">
    <property type="entry name" value="Translation initiation factor IF-2"/>
    <property type="match status" value="1"/>
</dbReference>
<dbReference type="FunFam" id="3.40.50.300:FF:000019">
    <property type="entry name" value="Translation initiation factor IF-2"/>
    <property type="match status" value="1"/>
</dbReference>
<dbReference type="Gene3D" id="3.40.50.300">
    <property type="entry name" value="P-loop containing nucleotide triphosphate hydrolases"/>
    <property type="match status" value="1"/>
</dbReference>
<dbReference type="Gene3D" id="3.30.56.50">
    <property type="entry name" value="Putative DNA-binding domain, N-terminal subdomain of bacterial translation initiation factor IF2"/>
    <property type="match status" value="1"/>
</dbReference>
<dbReference type="Gene3D" id="2.40.30.10">
    <property type="entry name" value="Translation factors"/>
    <property type="match status" value="2"/>
</dbReference>
<dbReference type="Gene3D" id="3.40.50.10050">
    <property type="entry name" value="Translation initiation factor IF- 2, domain 3"/>
    <property type="match status" value="1"/>
</dbReference>
<dbReference type="HAMAP" id="MF_00100_B">
    <property type="entry name" value="IF_2_B"/>
    <property type="match status" value="1"/>
</dbReference>
<dbReference type="InterPro" id="IPR009061">
    <property type="entry name" value="DNA-bd_dom_put_sf"/>
</dbReference>
<dbReference type="InterPro" id="IPR053905">
    <property type="entry name" value="EF-G-like_DII"/>
</dbReference>
<dbReference type="InterPro" id="IPR004161">
    <property type="entry name" value="EFTu-like_2"/>
</dbReference>
<dbReference type="InterPro" id="IPR013575">
    <property type="entry name" value="IF2_assoc_dom_bac"/>
</dbReference>
<dbReference type="InterPro" id="IPR044145">
    <property type="entry name" value="IF2_II"/>
</dbReference>
<dbReference type="InterPro" id="IPR006847">
    <property type="entry name" value="IF2_N"/>
</dbReference>
<dbReference type="InterPro" id="IPR027417">
    <property type="entry name" value="P-loop_NTPase"/>
</dbReference>
<dbReference type="InterPro" id="IPR005225">
    <property type="entry name" value="Small_GTP-bd"/>
</dbReference>
<dbReference type="InterPro" id="IPR000795">
    <property type="entry name" value="T_Tr_GTP-bd_dom"/>
</dbReference>
<dbReference type="InterPro" id="IPR000178">
    <property type="entry name" value="TF_IF2_bacterial-like"/>
</dbReference>
<dbReference type="InterPro" id="IPR015760">
    <property type="entry name" value="TIF_IF2"/>
</dbReference>
<dbReference type="InterPro" id="IPR023115">
    <property type="entry name" value="TIF_IF2_dom3"/>
</dbReference>
<dbReference type="InterPro" id="IPR036925">
    <property type="entry name" value="TIF_IF2_dom3_sf"/>
</dbReference>
<dbReference type="InterPro" id="IPR009000">
    <property type="entry name" value="Transl_B-barrel_sf"/>
</dbReference>
<dbReference type="NCBIfam" id="TIGR00487">
    <property type="entry name" value="IF-2"/>
    <property type="match status" value="1"/>
</dbReference>
<dbReference type="NCBIfam" id="TIGR00231">
    <property type="entry name" value="small_GTP"/>
    <property type="match status" value="1"/>
</dbReference>
<dbReference type="PANTHER" id="PTHR43381:SF5">
    <property type="entry name" value="TR-TYPE G DOMAIN-CONTAINING PROTEIN"/>
    <property type="match status" value="1"/>
</dbReference>
<dbReference type="PANTHER" id="PTHR43381">
    <property type="entry name" value="TRANSLATION INITIATION FACTOR IF-2-RELATED"/>
    <property type="match status" value="1"/>
</dbReference>
<dbReference type="Pfam" id="PF22042">
    <property type="entry name" value="EF-G_D2"/>
    <property type="match status" value="1"/>
</dbReference>
<dbReference type="Pfam" id="PF00009">
    <property type="entry name" value="GTP_EFTU"/>
    <property type="match status" value="1"/>
</dbReference>
<dbReference type="Pfam" id="PF03144">
    <property type="entry name" value="GTP_EFTU_D2"/>
    <property type="match status" value="1"/>
</dbReference>
<dbReference type="Pfam" id="PF11987">
    <property type="entry name" value="IF-2"/>
    <property type="match status" value="1"/>
</dbReference>
<dbReference type="Pfam" id="PF08364">
    <property type="entry name" value="IF2_assoc"/>
    <property type="match status" value="1"/>
</dbReference>
<dbReference type="Pfam" id="PF04760">
    <property type="entry name" value="IF2_N"/>
    <property type="match status" value="2"/>
</dbReference>
<dbReference type="SUPFAM" id="SSF52156">
    <property type="entry name" value="Initiation factor IF2/eIF5b, domain 3"/>
    <property type="match status" value="1"/>
</dbReference>
<dbReference type="SUPFAM" id="SSF52540">
    <property type="entry name" value="P-loop containing nucleoside triphosphate hydrolases"/>
    <property type="match status" value="1"/>
</dbReference>
<dbReference type="SUPFAM" id="SSF46955">
    <property type="entry name" value="Putative DNA-binding domain"/>
    <property type="match status" value="1"/>
</dbReference>
<dbReference type="SUPFAM" id="SSF50447">
    <property type="entry name" value="Translation proteins"/>
    <property type="match status" value="2"/>
</dbReference>
<dbReference type="PROSITE" id="PS51722">
    <property type="entry name" value="G_TR_2"/>
    <property type="match status" value="1"/>
</dbReference>
<dbReference type="PROSITE" id="PS01176">
    <property type="entry name" value="IF2"/>
    <property type="match status" value="1"/>
</dbReference>
<organism>
    <name type="scientific">Escherichia coli (strain 55989 / EAEC)</name>
    <dbReference type="NCBI Taxonomy" id="585055"/>
    <lineage>
        <taxon>Bacteria</taxon>
        <taxon>Pseudomonadati</taxon>
        <taxon>Pseudomonadota</taxon>
        <taxon>Gammaproteobacteria</taxon>
        <taxon>Enterobacterales</taxon>
        <taxon>Enterobacteriaceae</taxon>
        <taxon>Escherichia</taxon>
    </lineage>
</organism>
<name>IF2_ECO55</name>
<keyword id="KW-0007">Acetylation</keyword>
<keyword id="KW-0963">Cytoplasm</keyword>
<keyword id="KW-0342">GTP-binding</keyword>
<keyword id="KW-0396">Initiation factor</keyword>
<keyword id="KW-0547">Nucleotide-binding</keyword>
<keyword id="KW-0648">Protein biosynthesis</keyword>
<keyword id="KW-1185">Reference proteome</keyword>
<accession>B7LHN3</accession>
<sequence>MTDVTIKTLAAERQTSVERLVQQFADAGIRKSADDSVSAQEKQTLIDHLNQKNSGPDKLTLQRKTRSTLNIPGTGGKSKSVQIEVRKKRTFVKRDPQEAERLAAEEQAQREAEEQARREAEESAKREAQQKAEREAAEQAKREAAEQAKREAAEKDKVSNQQDDMTKNAQAEKARREQEAAELKRKAEEEARRKLEEEARRVAEEARRMAEENKWTDNAEPTEDSSDYHVTTSQHARQAEDESDREVEGGRGRGRNAKAARPKKGNKHAESKADREEARAAVRGGKGGKRKGSSLQQGFQKPAQAVNRDVVIGETITVGELANKMAVKGSQVIKAMMKLGAMATINQVIDQETAQLVAEEMGHKVILRRENELEEAVMSDRDTGAAAEPRAPVVTIMGHVDHGKTSLLDYIRSTKVASGEAGGITQHIGAYHVETENGMITFLDTPGHAAFTSMRARGAQATDIVVLVVAADDGVMPQTIEAIQHAKAAQVPVVVAVNKIDKPEADPDRVKNELSQYGILPEEWGGESQFVHVSAKAGTGIDELLDAILLQAEVLELKAVRKGMASGAVIESFLDKGRGPVATVLVREGTLHKGDIVLCGFEYGRVRAMRNELGQEVLEAGPSIPVEILGLSGVPAAGDEVTVVRDEKKAREVALYRQGKFREVKLARQQKSKLENMFANMTEGEVHEVNIVLKADVQGSVEAISDSLLKLSTDEVKVKIIGSGVGGITETDATLAAASNAILVGFNVRADASARKVIEAESLDLRYYSVIYNLIDEVKAAMSGMLSPELKQQIIGLAEVRDVFKSPKFGAIAGCMVTEGVVKRHNPIRVLRDNVVIYEGELESLRRFKDDVNEVRNGMECGIGVKNYNDVRTGDVIEVFEIIEIQRTIA</sequence>
<comment type="function">
    <text evidence="2">One of the essential components for the initiation of protein synthesis. Protects formylmethionyl-tRNA from spontaneous hydrolysis and promotes its binding to the 30S ribosomal subunits. Also involved in the hydrolysis of GTP during the formation of the 70S ribosomal complex.</text>
</comment>
<comment type="subcellular location">
    <subcellularLocation>
        <location evidence="2">Cytoplasm</location>
    </subcellularLocation>
</comment>
<comment type="similarity">
    <text evidence="2">Belongs to the TRAFAC class translation factor GTPase superfamily. Classic translation factor GTPase family. IF-2 subfamily.</text>
</comment>
<proteinExistence type="inferred from homology"/>
<feature type="chain" id="PRO_1000118761" description="Translation initiation factor IF-2">
    <location>
        <begin position="1"/>
        <end position="890"/>
    </location>
</feature>
<feature type="domain" description="tr-type G">
    <location>
        <begin position="389"/>
        <end position="558"/>
    </location>
</feature>
<feature type="region of interest" description="Disordered" evidence="3">
    <location>
        <begin position="45"/>
        <end position="304"/>
    </location>
</feature>
<feature type="region of interest" description="G1" evidence="1">
    <location>
        <begin position="398"/>
        <end position="405"/>
    </location>
</feature>
<feature type="region of interest" description="G2" evidence="1">
    <location>
        <begin position="423"/>
        <end position="427"/>
    </location>
</feature>
<feature type="region of interest" description="G3" evidence="1">
    <location>
        <begin position="444"/>
        <end position="447"/>
    </location>
</feature>
<feature type="region of interest" description="G4" evidence="1">
    <location>
        <begin position="498"/>
        <end position="501"/>
    </location>
</feature>
<feature type="region of interest" description="G5" evidence="1">
    <location>
        <begin position="534"/>
        <end position="536"/>
    </location>
</feature>
<feature type="compositionally biased region" description="Polar residues" evidence="3">
    <location>
        <begin position="67"/>
        <end position="81"/>
    </location>
</feature>
<feature type="compositionally biased region" description="Basic and acidic residues" evidence="3">
    <location>
        <begin position="92"/>
        <end position="217"/>
    </location>
</feature>
<feature type="compositionally biased region" description="Basic residues" evidence="3">
    <location>
        <begin position="252"/>
        <end position="266"/>
    </location>
</feature>
<feature type="compositionally biased region" description="Basic and acidic residues" evidence="3">
    <location>
        <begin position="267"/>
        <end position="280"/>
    </location>
</feature>
<feature type="binding site" evidence="2">
    <location>
        <begin position="398"/>
        <end position="405"/>
    </location>
    <ligand>
        <name>GTP</name>
        <dbReference type="ChEBI" id="CHEBI:37565"/>
    </ligand>
</feature>
<feature type="binding site" evidence="2">
    <location>
        <begin position="444"/>
        <end position="448"/>
    </location>
    <ligand>
        <name>GTP</name>
        <dbReference type="ChEBI" id="CHEBI:37565"/>
    </ligand>
</feature>
<feature type="binding site" evidence="2">
    <location>
        <begin position="498"/>
        <end position="501"/>
    </location>
    <ligand>
        <name>GTP</name>
        <dbReference type="ChEBI" id="CHEBI:37565"/>
    </ligand>
</feature>
<feature type="modified residue" description="N6-acetyllysine" evidence="1">
    <location>
        <position position="808"/>
    </location>
</feature>
<gene>
    <name evidence="2" type="primary">infB</name>
    <name type="ordered locus">EC55989_3588</name>
</gene>
<protein>
    <recommendedName>
        <fullName evidence="2">Translation initiation factor IF-2</fullName>
    </recommendedName>
</protein>
<evidence type="ECO:0000250" key="1"/>
<evidence type="ECO:0000255" key="2">
    <source>
        <dbReference type="HAMAP-Rule" id="MF_00100"/>
    </source>
</evidence>
<evidence type="ECO:0000256" key="3">
    <source>
        <dbReference type="SAM" id="MobiDB-lite"/>
    </source>
</evidence>